<reference key="1">
    <citation type="submission" date="2008-02" db="EMBL/GenBank/DDBJ databases">
        <title>Complete sequence of chromosome of Methylobacterium sp. 4-46.</title>
        <authorList>
            <consortium name="US DOE Joint Genome Institute"/>
            <person name="Copeland A."/>
            <person name="Lucas S."/>
            <person name="Lapidus A."/>
            <person name="Glavina del Rio T."/>
            <person name="Dalin E."/>
            <person name="Tice H."/>
            <person name="Bruce D."/>
            <person name="Goodwin L."/>
            <person name="Pitluck S."/>
            <person name="Chertkov O."/>
            <person name="Brettin T."/>
            <person name="Detter J.C."/>
            <person name="Han C."/>
            <person name="Kuske C.R."/>
            <person name="Schmutz J."/>
            <person name="Larimer F."/>
            <person name="Land M."/>
            <person name="Hauser L."/>
            <person name="Kyrpides N."/>
            <person name="Ivanova N."/>
            <person name="Marx C.J."/>
            <person name="Richardson P."/>
        </authorList>
    </citation>
    <scope>NUCLEOTIDE SEQUENCE [LARGE SCALE GENOMIC DNA]</scope>
    <source>
        <strain>4-46</strain>
    </source>
</reference>
<keyword id="KW-0963">Cytoplasm</keyword>
<keyword id="KW-0460">Magnesium</keyword>
<keyword id="KW-0479">Metal-binding</keyword>
<keyword id="KW-0548">Nucleotidyltransferase</keyword>
<keyword id="KW-0694">RNA-binding</keyword>
<keyword id="KW-0808">Transferase</keyword>
<accession>B0UEX5</accession>
<protein>
    <recommendedName>
        <fullName evidence="1">Polyribonucleotide nucleotidyltransferase</fullName>
        <ecNumber evidence="1">2.7.7.8</ecNumber>
    </recommendedName>
    <alternativeName>
        <fullName evidence="1">Polynucleotide phosphorylase</fullName>
        <shortName evidence="1">PNPase</shortName>
    </alternativeName>
</protein>
<proteinExistence type="inferred from homology"/>
<name>PNP_METS4</name>
<dbReference type="EC" id="2.7.7.8" evidence="1"/>
<dbReference type="EMBL" id="CP000943">
    <property type="protein sequence ID" value="ACA19245.1"/>
    <property type="molecule type" value="Genomic_DNA"/>
</dbReference>
<dbReference type="RefSeq" id="WP_012334632.1">
    <property type="nucleotide sequence ID" value="NC_010511.1"/>
</dbReference>
<dbReference type="SMR" id="B0UEX5"/>
<dbReference type="STRING" id="426117.M446_4916"/>
<dbReference type="KEGG" id="met:M446_4916"/>
<dbReference type="eggNOG" id="COG1185">
    <property type="taxonomic scope" value="Bacteria"/>
</dbReference>
<dbReference type="HOGENOM" id="CLU_004217_2_2_5"/>
<dbReference type="GO" id="GO:0005829">
    <property type="term" value="C:cytosol"/>
    <property type="evidence" value="ECO:0007669"/>
    <property type="project" value="TreeGrafter"/>
</dbReference>
<dbReference type="GO" id="GO:0000175">
    <property type="term" value="F:3'-5'-RNA exonuclease activity"/>
    <property type="evidence" value="ECO:0007669"/>
    <property type="project" value="TreeGrafter"/>
</dbReference>
<dbReference type="GO" id="GO:0000287">
    <property type="term" value="F:magnesium ion binding"/>
    <property type="evidence" value="ECO:0007669"/>
    <property type="project" value="UniProtKB-UniRule"/>
</dbReference>
<dbReference type="GO" id="GO:0004654">
    <property type="term" value="F:polyribonucleotide nucleotidyltransferase activity"/>
    <property type="evidence" value="ECO:0007669"/>
    <property type="project" value="UniProtKB-UniRule"/>
</dbReference>
<dbReference type="GO" id="GO:0003723">
    <property type="term" value="F:RNA binding"/>
    <property type="evidence" value="ECO:0007669"/>
    <property type="project" value="UniProtKB-UniRule"/>
</dbReference>
<dbReference type="GO" id="GO:0006402">
    <property type="term" value="P:mRNA catabolic process"/>
    <property type="evidence" value="ECO:0007669"/>
    <property type="project" value="UniProtKB-UniRule"/>
</dbReference>
<dbReference type="GO" id="GO:0006396">
    <property type="term" value="P:RNA processing"/>
    <property type="evidence" value="ECO:0007669"/>
    <property type="project" value="InterPro"/>
</dbReference>
<dbReference type="CDD" id="cd02393">
    <property type="entry name" value="KH-I_PNPase"/>
    <property type="match status" value="1"/>
</dbReference>
<dbReference type="CDD" id="cd11363">
    <property type="entry name" value="RNase_PH_PNPase_1"/>
    <property type="match status" value="1"/>
</dbReference>
<dbReference type="CDD" id="cd11364">
    <property type="entry name" value="RNase_PH_PNPase_2"/>
    <property type="match status" value="1"/>
</dbReference>
<dbReference type="CDD" id="cd04472">
    <property type="entry name" value="S1_PNPase"/>
    <property type="match status" value="1"/>
</dbReference>
<dbReference type="FunFam" id="2.40.50.140:FF:000107">
    <property type="entry name" value="Polyribonucleotide nucleotidyltransferase"/>
    <property type="match status" value="1"/>
</dbReference>
<dbReference type="FunFam" id="3.30.1370.10:FF:000001">
    <property type="entry name" value="Polyribonucleotide nucleotidyltransferase"/>
    <property type="match status" value="1"/>
</dbReference>
<dbReference type="FunFam" id="3.30.230.70:FF:000001">
    <property type="entry name" value="Polyribonucleotide nucleotidyltransferase"/>
    <property type="match status" value="1"/>
</dbReference>
<dbReference type="FunFam" id="3.30.230.70:FF:000002">
    <property type="entry name" value="Polyribonucleotide nucleotidyltransferase"/>
    <property type="match status" value="1"/>
</dbReference>
<dbReference type="Gene3D" id="3.30.230.70">
    <property type="entry name" value="GHMP Kinase, N-terminal domain"/>
    <property type="match status" value="2"/>
</dbReference>
<dbReference type="Gene3D" id="3.30.1370.10">
    <property type="entry name" value="K Homology domain, type 1"/>
    <property type="match status" value="1"/>
</dbReference>
<dbReference type="Gene3D" id="2.40.50.140">
    <property type="entry name" value="Nucleic acid-binding proteins"/>
    <property type="match status" value="1"/>
</dbReference>
<dbReference type="HAMAP" id="MF_01595">
    <property type="entry name" value="PNPase"/>
    <property type="match status" value="1"/>
</dbReference>
<dbReference type="InterPro" id="IPR001247">
    <property type="entry name" value="ExoRNase_PH_dom1"/>
</dbReference>
<dbReference type="InterPro" id="IPR015847">
    <property type="entry name" value="ExoRNase_PH_dom2"/>
</dbReference>
<dbReference type="InterPro" id="IPR036345">
    <property type="entry name" value="ExoRNase_PH_dom2_sf"/>
</dbReference>
<dbReference type="InterPro" id="IPR004087">
    <property type="entry name" value="KH_dom"/>
</dbReference>
<dbReference type="InterPro" id="IPR004088">
    <property type="entry name" value="KH_dom_type_1"/>
</dbReference>
<dbReference type="InterPro" id="IPR036612">
    <property type="entry name" value="KH_dom_type_1_sf"/>
</dbReference>
<dbReference type="InterPro" id="IPR012340">
    <property type="entry name" value="NA-bd_OB-fold"/>
</dbReference>
<dbReference type="InterPro" id="IPR012162">
    <property type="entry name" value="PNPase"/>
</dbReference>
<dbReference type="InterPro" id="IPR027408">
    <property type="entry name" value="PNPase/RNase_PH_dom_sf"/>
</dbReference>
<dbReference type="InterPro" id="IPR015848">
    <property type="entry name" value="PNPase_PH_RNA-bd_bac/org-type"/>
</dbReference>
<dbReference type="InterPro" id="IPR020568">
    <property type="entry name" value="Ribosomal_Su5_D2-typ_SF"/>
</dbReference>
<dbReference type="InterPro" id="IPR003029">
    <property type="entry name" value="S1_domain"/>
</dbReference>
<dbReference type="NCBIfam" id="TIGR03591">
    <property type="entry name" value="polynuc_phos"/>
    <property type="match status" value="1"/>
</dbReference>
<dbReference type="NCBIfam" id="NF008805">
    <property type="entry name" value="PRK11824.1"/>
    <property type="match status" value="1"/>
</dbReference>
<dbReference type="PANTHER" id="PTHR11252">
    <property type="entry name" value="POLYRIBONUCLEOTIDE NUCLEOTIDYLTRANSFERASE"/>
    <property type="match status" value="1"/>
</dbReference>
<dbReference type="PANTHER" id="PTHR11252:SF0">
    <property type="entry name" value="POLYRIBONUCLEOTIDE NUCLEOTIDYLTRANSFERASE 1, MITOCHONDRIAL"/>
    <property type="match status" value="1"/>
</dbReference>
<dbReference type="Pfam" id="PF00013">
    <property type="entry name" value="KH_1"/>
    <property type="match status" value="1"/>
</dbReference>
<dbReference type="Pfam" id="PF03726">
    <property type="entry name" value="PNPase"/>
    <property type="match status" value="1"/>
</dbReference>
<dbReference type="Pfam" id="PF01138">
    <property type="entry name" value="RNase_PH"/>
    <property type="match status" value="2"/>
</dbReference>
<dbReference type="Pfam" id="PF03725">
    <property type="entry name" value="RNase_PH_C"/>
    <property type="match status" value="2"/>
</dbReference>
<dbReference type="Pfam" id="PF00575">
    <property type="entry name" value="S1"/>
    <property type="match status" value="1"/>
</dbReference>
<dbReference type="PIRSF" id="PIRSF005499">
    <property type="entry name" value="PNPase"/>
    <property type="match status" value="1"/>
</dbReference>
<dbReference type="SMART" id="SM00322">
    <property type="entry name" value="KH"/>
    <property type="match status" value="1"/>
</dbReference>
<dbReference type="SMART" id="SM00316">
    <property type="entry name" value="S1"/>
    <property type="match status" value="1"/>
</dbReference>
<dbReference type="SUPFAM" id="SSF54791">
    <property type="entry name" value="Eukaryotic type KH-domain (KH-domain type I)"/>
    <property type="match status" value="1"/>
</dbReference>
<dbReference type="SUPFAM" id="SSF50249">
    <property type="entry name" value="Nucleic acid-binding proteins"/>
    <property type="match status" value="1"/>
</dbReference>
<dbReference type="SUPFAM" id="SSF55666">
    <property type="entry name" value="Ribonuclease PH domain 2-like"/>
    <property type="match status" value="2"/>
</dbReference>
<dbReference type="SUPFAM" id="SSF54211">
    <property type="entry name" value="Ribosomal protein S5 domain 2-like"/>
    <property type="match status" value="2"/>
</dbReference>
<dbReference type="PROSITE" id="PS50084">
    <property type="entry name" value="KH_TYPE_1"/>
    <property type="match status" value="1"/>
</dbReference>
<dbReference type="PROSITE" id="PS50126">
    <property type="entry name" value="S1"/>
    <property type="match status" value="1"/>
</dbReference>
<gene>
    <name evidence="1" type="primary">pnp</name>
    <name type="ordered locus">M446_4916</name>
</gene>
<comment type="function">
    <text evidence="1">Involved in mRNA degradation. Catalyzes the phosphorolysis of single-stranded polyribonucleotides processively in the 3'- to 5'-direction.</text>
</comment>
<comment type="catalytic activity">
    <reaction evidence="1">
        <text>RNA(n+1) + phosphate = RNA(n) + a ribonucleoside 5'-diphosphate</text>
        <dbReference type="Rhea" id="RHEA:22096"/>
        <dbReference type="Rhea" id="RHEA-COMP:14527"/>
        <dbReference type="Rhea" id="RHEA-COMP:17342"/>
        <dbReference type="ChEBI" id="CHEBI:43474"/>
        <dbReference type="ChEBI" id="CHEBI:57930"/>
        <dbReference type="ChEBI" id="CHEBI:140395"/>
        <dbReference type="EC" id="2.7.7.8"/>
    </reaction>
</comment>
<comment type="cofactor">
    <cofactor evidence="1">
        <name>Mg(2+)</name>
        <dbReference type="ChEBI" id="CHEBI:18420"/>
    </cofactor>
</comment>
<comment type="subcellular location">
    <subcellularLocation>
        <location evidence="1">Cytoplasm</location>
    </subcellularLocation>
</comment>
<comment type="similarity">
    <text evidence="1">Belongs to the polyribonucleotide nucleotidyltransferase family.</text>
</comment>
<feature type="chain" id="PRO_1000147932" description="Polyribonucleotide nucleotidyltransferase">
    <location>
        <begin position="1"/>
        <end position="725"/>
    </location>
</feature>
<feature type="domain" description="KH" evidence="1">
    <location>
        <begin position="554"/>
        <end position="613"/>
    </location>
</feature>
<feature type="domain" description="S1 motif" evidence="1">
    <location>
        <begin position="623"/>
        <end position="691"/>
    </location>
</feature>
<feature type="region of interest" description="Disordered" evidence="2">
    <location>
        <begin position="699"/>
        <end position="725"/>
    </location>
</feature>
<feature type="compositionally biased region" description="Basic and acidic residues" evidence="2">
    <location>
        <begin position="701"/>
        <end position="719"/>
    </location>
</feature>
<feature type="binding site" evidence="1">
    <location>
        <position position="487"/>
    </location>
    <ligand>
        <name>Mg(2+)</name>
        <dbReference type="ChEBI" id="CHEBI:18420"/>
    </ligand>
</feature>
<feature type="binding site" evidence="1">
    <location>
        <position position="493"/>
    </location>
    <ligand>
        <name>Mg(2+)</name>
        <dbReference type="ChEBI" id="CHEBI:18420"/>
    </ligand>
</feature>
<organism>
    <name type="scientific">Methylobacterium sp. (strain 4-46)</name>
    <dbReference type="NCBI Taxonomy" id="426117"/>
    <lineage>
        <taxon>Bacteria</taxon>
        <taxon>Pseudomonadati</taxon>
        <taxon>Pseudomonadota</taxon>
        <taxon>Alphaproteobacteria</taxon>
        <taxon>Hyphomicrobiales</taxon>
        <taxon>Methylobacteriaceae</taxon>
        <taxon>Methylobacterium</taxon>
    </lineage>
</organism>
<sequence>MFDTQREELLWGGRKLVLETGKVARQADGAVVASYGETTVLATVVSMKEPKPGIDFLPLTVNYQERAYAAGRIPGGYFKREGRPSEKETLVSRLIDRPIRPLFVEGWRNDTQVVVTVLSHDLENDPDIVSMVAASAALTLSGVPFMGPIGAARVGYLGGQYKLNPTVQEMEESSLDLVVAGTDAAVLMVESEAKELPEDVMLGAVMFGHKHFQPVIEAIIRLAEKAAKEPRDFQPTDLTEVEKAVLEIGEADLREAYRKTVKQERYAAVDAVKAKVMAALVPEGGEAKFEPEKVKAAFKEVQAKVVRWNILDTGSRIDGRDVRTVRPILSEVGVLPRAHGSALFTRGETQALVVATLGTGDDEQFIDALEGTYKETFLLHYNFPPYSVGETGRMGSPGRREIGHGKLAWRAVHPLLPPAHEFPYTLRVVSEITESNGSSSMATVCGSSLALMDAGVPLRRPVAGIAMGLILEGERYAVLSDILGDEDHLGDMDFKVAGTEEGVTSLQMDIKIAGITEEIMRVALDQAKEGRAHILGEMAKALTAARPELGEHAPRIETMQIPTDKIREVIGTGGKVIREIVEKTGAKIDIQDTGVVKIASSDGKAIKAAYNWIRSIVAEPEAGMIYDGTVVKTMEFGAFVNFFGAKDGLVHISELAPQRVAKVTDVVKEGDKVKVKFLGQDERGKIRLSMKVVDQQTGEDLTEKLKAEREADRNRERQARQSAGE</sequence>
<evidence type="ECO:0000255" key="1">
    <source>
        <dbReference type="HAMAP-Rule" id="MF_01595"/>
    </source>
</evidence>
<evidence type="ECO:0000256" key="2">
    <source>
        <dbReference type="SAM" id="MobiDB-lite"/>
    </source>
</evidence>